<name>HIR1_CHAGB</name>
<dbReference type="EMBL" id="CH408034">
    <property type="protein sequence ID" value="EAQ85041.1"/>
    <property type="molecule type" value="Genomic_DNA"/>
</dbReference>
<dbReference type="RefSeq" id="XP_001226982.1">
    <property type="nucleotide sequence ID" value="XM_001226981.1"/>
</dbReference>
<dbReference type="SMR" id="Q2GSJ9"/>
<dbReference type="FunCoup" id="Q2GSJ9">
    <property type="interactions" value="150"/>
</dbReference>
<dbReference type="STRING" id="306901.Q2GSJ9"/>
<dbReference type="GeneID" id="4395314"/>
<dbReference type="VEuPathDB" id="FungiDB:CHGG_09055"/>
<dbReference type="eggNOG" id="KOG0973">
    <property type="taxonomic scope" value="Eukaryota"/>
</dbReference>
<dbReference type="HOGENOM" id="CLU_004372_3_1_1"/>
<dbReference type="InParanoid" id="Q2GSJ9"/>
<dbReference type="OMA" id="RGSWDGD"/>
<dbReference type="OrthoDB" id="1741719at2759"/>
<dbReference type="Proteomes" id="UP000001056">
    <property type="component" value="Unassembled WGS sequence"/>
</dbReference>
<dbReference type="GO" id="GO:0000785">
    <property type="term" value="C:chromatin"/>
    <property type="evidence" value="ECO:0007669"/>
    <property type="project" value="TreeGrafter"/>
</dbReference>
<dbReference type="GO" id="GO:0000417">
    <property type="term" value="C:HIR complex"/>
    <property type="evidence" value="ECO:0007669"/>
    <property type="project" value="EnsemblFungi"/>
</dbReference>
<dbReference type="GO" id="GO:0005634">
    <property type="term" value="C:nucleus"/>
    <property type="evidence" value="ECO:0007669"/>
    <property type="project" value="UniProtKB-SubCell"/>
</dbReference>
<dbReference type="GO" id="GO:0031491">
    <property type="term" value="F:nucleosome binding"/>
    <property type="evidence" value="ECO:0007669"/>
    <property type="project" value="TreeGrafter"/>
</dbReference>
<dbReference type="GO" id="GO:0006338">
    <property type="term" value="P:chromatin remodeling"/>
    <property type="evidence" value="ECO:0007669"/>
    <property type="project" value="InterPro"/>
</dbReference>
<dbReference type="GO" id="GO:0006351">
    <property type="term" value="P:DNA-templated transcription"/>
    <property type="evidence" value="ECO:0007669"/>
    <property type="project" value="InterPro"/>
</dbReference>
<dbReference type="GO" id="GO:0006355">
    <property type="term" value="P:regulation of DNA-templated transcription"/>
    <property type="evidence" value="ECO:0007669"/>
    <property type="project" value="InterPro"/>
</dbReference>
<dbReference type="CDD" id="cd00200">
    <property type="entry name" value="WD40"/>
    <property type="match status" value="1"/>
</dbReference>
<dbReference type="FunFam" id="2.130.10.10:FF:000290">
    <property type="entry name" value="Protein HIR"/>
    <property type="match status" value="1"/>
</dbReference>
<dbReference type="FunFam" id="2.130.10.10:FF:001557">
    <property type="entry name" value="Protein HIR"/>
    <property type="match status" value="1"/>
</dbReference>
<dbReference type="Gene3D" id="2.130.10.10">
    <property type="entry name" value="YVTN repeat-like/Quinoprotein amine dehydrogenase"/>
    <property type="match status" value="2"/>
</dbReference>
<dbReference type="InterPro" id="IPR055410">
    <property type="entry name" value="CAF1B_HIR1_beta-prop"/>
</dbReference>
<dbReference type="InterPro" id="IPR031120">
    <property type="entry name" value="HIR1-like"/>
</dbReference>
<dbReference type="InterPro" id="IPR011494">
    <property type="entry name" value="HIRA-like_C"/>
</dbReference>
<dbReference type="InterPro" id="IPR019015">
    <property type="entry name" value="HIRA_B_motif"/>
</dbReference>
<dbReference type="InterPro" id="IPR015943">
    <property type="entry name" value="WD40/YVTN_repeat-like_dom_sf"/>
</dbReference>
<dbReference type="InterPro" id="IPR036322">
    <property type="entry name" value="WD40_repeat_dom_sf"/>
</dbReference>
<dbReference type="InterPro" id="IPR001680">
    <property type="entry name" value="WD40_rpt"/>
</dbReference>
<dbReference type="PANTHER" id="PTHR13831">
    <property type="entry name" value="MEMBER OF THE HIR1 FAMILY OF WD-REPEAT PROTEINS"/>
    <property type="match status" value="1"/>
</dbReference>
<dbReference type="PANTHER" id="PTHR13831:SF0">
    <property type="entry name" value="PROTEIN HIRA"/>
    <property type="match status" value="1"/>
</dbReference>
<dbReference type="Pfam" id="PF24105">
    <property type="entry name" value="Beta-prop_CAF1B_HIR1"/>
    <property type="match status" value="1"/>
</dbReference>
<dbReference type="Pfam" id="PF07569">
    <property type="entry name" value="Hira"/>
    <property type="match status" value="1"/>
</dbReference>
<dbReference type="Pfam" id="PF09453">
    <property type="entry name" value="HIRA_B"/>
    <property type="match status" value="1"/>
</dbReference>
<dbReference type="SMART" id="SM00320">
    <property type="entry name" value="WD40"/>
    <property type="match status" value="6"/>
</dbReference>
<dbReference type="SUPFAM" id="SSF50978">
    <property type="entry name" value="WD40 repeat-like"/>
    <property type="match status" value="1"/>
</dbReference>
<dbReference type="PROSITE" id="PS00678">
    <property type="entry name" value="WD_REPEATS_1"/>
    <property type="match status" value="1"/>
</dbReference>
<dbReference type="PROSITE" id="PS50082">
    <property type="entry name" value="WD_REPEATS_2"/>
    <property type="match status" value="4"/>
</dbReference>
<dbReference type="PROSITE" id="PS50294">
    <property type="entry name" value="WD_REPEATS_REGION"/>
    <property type="match status" value="2"/>
</dbReference>
<accession>Q2GSJ9</accession>
<evidence type="ECO:0000250" key="1"/>
<evidence type="ECO:0000255" key="2"/>
<evidence type="ECO:0000256" key="3">
    <source>
        <dbReference type="SAM" id="MobiDB-lite"/>
    </source>
</evidence>
<evidence type="ECO:0000305" key="4"/>
<gene>
    <name type="primary">HIR1</name>
    <name type="ORF">CHGG_09055</name>
</gene>
<comment type="function">
    <text evidence="1">Required for replication-independent chromatin assembly and for the periodic repression of histone gene transcription during the cell cycle.</text>
</comment>
<comment type="subcellular location">
    <subcellularLocation>
        <location evidence="1">Nucleus</location>
    </subcellularLocation>
</comment>
<comment type="similarity">
    <text evidence="4">Belongs to the WD repeat HIR1 family.</text>
</comment>
<protein>
    <recommendedName>
        <fullName>Protein HIR1</fullName>
    </recommendedName>
</protein>
<proteinExistence type="inferred from homology"/>
<feature type="chain" id="PRO_0000286407" description="Protein HIR1">
    <location>
        <begin position="1"/>
        <end position="1080"/>
    </location>
</feature>
<feature type="repeat" description="WD 1">
    <location>
        <begin position="15"/>
        <end position="54"/>
    </location>
</feature>
<feature type="repeat" description="WD 2">
    <location>
        <begin position="68"/>
        <end position="107"/>
    </location>
</feature>
<feature type="repeat" description="WD 3">
    <location>
        <begin position="129"/>
        <end position="168"/>
    </location>
</feature>
<feature type="repeat" description="WD 4">
    <location>
        <begin position="171"/>
        <end position="210"/>
    </location>
</feature>
<feature type="repeat" description="WD 5">
    <location>
        <begin position="232"/>
        <end position="275"/>
    </location>
</feature>
<feature type="repeat" description="WD 6">
    <location>
        <begin position="278"/>
        <end position="336"/>
    </location>
</feature>
<feature type="repeat" description="WD 7">
    <location>
        <begin position="340"/>
        <end position="381"/>
    </location>
</feature>
<feature type="region of interest" description="Disordered" evidence="3">
    <location>
        <begin position="430"/>
        <end position="479"/>
    </location>
</feature>
<feature type="region of interest" description="Disordered" evidence="3">
    <location>
        <begin position="520"/>
        <end position="546"/>
    </location>
</feature>
<feature type="region of interest" description="Disordered" evidence="3">
    <location>
        <begin position="1051"/>
        <end position="1080"/>
    </location>
</feature>
<feature type="coiled-coil region" evidence="2">
    <location>
        <begin position="469"/>
        <end position="496"/>
    </location>
</feature>
<feature type="compositionally biased region" description="Polar residues" evidence="3">
    <location>
        <begin position="442"/>
        <end position="460"/>
    </location>
</feature>
<feature type="compositionally biased region" description="Polar residues" evidence="3">
    <location>
        <begin position="520"/>
        <end position="539"/>
    </location>
</feature>
<keyword id="KW-0156">Chromatin regulator</keyword>
<keyword id="KW-0175">Coiled coil</keyword>
<keyword id="KW-0539">Nucleus</keyword>
<keyword id="KW-1185">Reference proteome</keyword>
<keyword id="KW-0677">Repeat</keyword>
<keyword id="KW-0678">Repressor</keyword>
<keyword id="KW-0804">Transcription</keyword>
<keyword id="KW-0805">Transcription regulation</keyword>
<keyword id="KW-0853">WD repeat</keyword>
<sequence>MHIIKPSWLRHSGEQKDFEVYSCHISPDGSRLATAGGDGHVRVWSTKAIFNADHPDHGKPRQLCHMSHHLGTIHSVRFSPNGRYLASGADDRVICIYQLDSNPPSHTATFGTNEPPPVENWKTHKRLVGHDSDVQDLAWSYDNSILVSVGLDSKVVVWSGHTFEKLKTIAVHQSHVKGITFDPANKFFATAGDDRHIKIFRFTPPPPNATQHDMVNNFVLETTISAPFKSSPLTTYFRRCSWSPDGNHIAAANAVNGPVSSVAIIERSRWDSEINLIGHEGPTEVCMFSPRLFHTQKPSDNATDKGSPGLVTVIASAGQDKTLSIWNTNTSRPVVILQDVASKSMSDLAWTPDGQTLFASSLDGTILAVKFEMGELGWVATAEENDKALQKYGGSRKGMGTAEDVDGLHLENHSKEGELRGAESRMGALMGDFQPEDKGKPVTTNGSRPTAKNGEANGTTEPKEKEAPKAAPAEENVEKTAERIAELKSRVQVTKDGKKRVAPLLVSSSATGLLSLPQSQLVGAKSTKTTQSDTPQTILDLSKPSHGLPRGGIAAMLLGNKRKAAAMEGEEEDELAGRRPSAGPVPILIDTPEGLEPAPLSAPAQGVVPTPEYLRPAVISPAISFSQTRLAVPKVRSHIVRPLEKGVLQGESTLDEASKVPENIVLEAKNPIRLREPAHISASKRGARLWQDYLPRAIILVTGNKHFWAAACEDGSVHTWTPAGRRLLNGIILESQPVILESREHWLLCITSVGLCHVFNIKTMSAAHPPVSLAPILDIAITSLSLEGPTPAPGVTSAHLNSVGAVVVTLSNGDGFYYSSTMYAWQRLSESWWALGSQYWNSNDSSISALSTTAVGPVTAKNINGTASSTTTTTTPDKPDTAATAEVGVSAGIIPHLERHTTSEFLLKGRAFTLQRLIKTLLSKDGFEGFESTVSVAHLENRIAGALALGAREEFRLYLFMYAKRIGAEGLRGKVEELLNCLVGGLLQQKGAPTNGGGGSGEAKGWFGKGEMLGGWERRELLKGVVLILGKFRDLQRLTVQYARILGLTADGEDEENDDNNGGGGGENGAVAEEMELEEQ</sequence>
<organism>
    <name type="scientific">Chaetomium globosum (strain ATCC 6205 / CBS 148.51 / DSM 1962 / NBRC 6347 / NRRL 1970)</name>
    <name type="common">Soil fungus</name>
    <dbReference type="NCBI Taxonomy" id="306901"/>
    <lineage>
        <taxon>Eukaryota</taxon>
        <taxon>Fungi</taxon>
        <taxon>Dikarya</taxon>
        <taxon>Ascomycota</taxon>
        <taxon>Pezizomycotina</taxon>
        <taxon>Sordariomycetes</taxon>
        <taxon>Sordariomycetidae</taxon>
        <taxon>Sordariales</taxon>
        <taxon>Chaetomiaceae</taxon>
        <taxon>Chaetomium</taxon>
    </lineage>
</organism>
<reference key="1">
    <citation type="journal article" date="2015" name="Genome Announc.">
        <title>Draft genome sequence of the cellulolytic fungus Chaetomium globosum.</title>
        <authorList>
            <person name="Cuomo C.A."/>
            <person name="Untereiner W.A."/>
            <person name="Ma L.-J."/>
            <person name="Grabherr M."/>
            <person name="Birren B.W."/>
        </authorList>
    </citation>
    <scope>NUCLEOTIDE SEQUENCE [LARGE SCALE GENOMIC DNA]</scope>
    <source>
        <strain>ATCC 6205 / CBS 148.51 / DSM 1962 / NBRC 6347 / NRRL 1970</strain>
    </source>
</reference>